<keyword id="KW-0028">Amino-acid biosynthesis</keyword>
<keyword id="KW-0100">Branched-chain amino acid biosynthesis</keyword>
<keyword id="KW-0432">Leucine biosynthesis</keyword>
<keyword id="KW-0456">Lyase</keyword>
<keyword id="KW-1185">Reference proteome</keyword>
<accession>C1CVE0</accession>
<name>LEUD_DEIDV</name>
<comment type="function">
    <text evidence="1">Catalyzes the isomerization between 2-isopropylmalate and 3-isopropylmalate, via the formation of 2-isopropylmaleate.</text>
</comment>
<comment type="catalytic activity">
    <reaction evidence="1">
        <text>(2R,3S)-3-isopropylmalate = (2S)-2-isopropylmalate</text>
        <dbReference type="Rhea" id="RHEA:32287"/>
        <dbReference type="ChEBI" id="CHEBI:1178"/>
        <dbReference type="ChEBI" id="CHEBI:35121"/>
        <dbReference type="EC" id="4.2.1.33"/>
    </reaction>
</comment>
<comment type="pathway">
    <text evidence="1">Amino-acid biosynthesis; L-leucine biosynthesis; L-leucine from 3-methyl-2-oxobutanoate: step 2/4.</text>
</comment>
<comment type="subunit">
    <text evidence="1">Heterodimer of LeuC and LeuD.</text>
</comment>
<comment type="similarity">
    <text evidence="1">Belongs to the LeuD family. LeuD type 2 subfamily.</text>
</comment>
<feature type="chain" id="PRO_1000213362" description="3-isopropylmalate dehydratase small subunit">
    <location>
        <begin position="1"/>
        <end position="181"/>
    </location>
</feature>
<reference key="1">
    <citation type="journal article" date="2009" name="PLoS Genet.">
        <title>Alliance of proteomics and genomics to unravel the specificities of Sahara bacterium Deinococcus deserti.</title>
        <authorList>
            <person name="de Groot A."/>
            <person name="Dulermo R."/>
            <person name="Ortet P."/>
            <person name="Blanchard L."/>
            <person name="Guerin P."/>
            <person name="Fernandez B."/>
            <person name="Vacherie B."/>
            <person name="Dossat C."/>
            <person name="Jolivet E."/>
            <person name="Siguier P."/>
            <person name="Chandler M."/>
            <person name="Barakat M."/>
            <person name="Dedieu A."/>
            <person name="Barbe V."/>
            <person name="Heulin T."/>
            <person name="Sommer S."/>
            <person name="Achouak W."/>
            <person name="Armengaud J."/>
        </authorList>
    </citation>
    <scope>NUCLEOTIDE SEQUENCE [LARGE SCALE GENOMIC DNA]</scope>
    <source>
        <strain>DSM 17065 / CIP 109153 / LMG 22923 / VCD115</strain>
    </source>
</reference>
<organism>
    <name type="scientific">Deinococcus deserti (strain DSM 17065 / CIP 109153 / LMG 22923 / VCD115)</name>
    <dbReference type="NCBI Taxonomy" id="546414"/>
    <lineage>
        <taxon>Bacteria</taxon>
        <taxon>Thermotogati</taxon>
        <taxon>Deinococcota</taxon>
        <taxon>Deinococci</taxon>
        <taxon>Deinococcales</taxon>
        <taxon>Deinococcaceae</taxon>
        <taxon>Deinococcus</taxon>
    </lineage>
</organism>
<dbReference type="EC" id="4.2.1.33" evidence="1"/>
<dbReference type="EMBL" id="CP001114">
    <property type="protein sequence ID" value="ACO46157.1"/>
    <property type="molecule type" value="Genomic_DNA"/>
</dbReference>
<dbReference type="RefSeq" id="WP_012693280.1">
    <property type="nucleotide sequence ID" value="NC_012526.1"/>
</dbReference>
<dbReference type="SMR" id="C1CVE0"/>
<dbReference type="STRING" id="546414.Deide_12400"/>
<dbReference type="PaxDb" id="546414-Deide_12400"/>
<dbReference type="KEGG" id="ddr:Deide_12400"/>
<dbReference type="eggNOG" id="COG0066">
    <property type="taxonomic scope" value="Bacteria"/>
</dbReference>
<dbReference type="HOGENOM" id="CLU_081378_1_1_0"/>
<dbReference type="OrthoDB" id="9777465at2"/>
<dbReference type="UniPathway" id="UPA00048">
    <property type="reaction ID" value="UER00071"/>
</dbReference>
<dbReference type="Proteomes" id="UP000002208">
    <property type="component" value="Chromosome"/>
</dbReference>
<dbReference type="GO" id="GO:0003861">
    <property type="term" value="F:3-isopropylmalate dehydratase activity"/>
    <property type="evidence" value="ECO:0007669"/>
    <property type="project" value="UniProtKB-UniRule"/>
</dbReference>
<dbReference type="GO" id="GO:0009098">
    <property type="term" value="P:L-leucine biosynthetic process"/>
    <property type="evidence" value="ECO:0007669"/>
    <property type="project" value="UniProtKB-UniRule"/>
</dbReference>
<dbReference type="CDD" id="cd01577">
    <property type="entry name" value="IPMI_Swivel"/>
    <property type="match status" value="1"/>
</dbReference>
<dbReference type="Gene3D" id="3.20.19.10">
    <property type="entry name" value="Aconitase, domain 4"/>
    <property type="match status" value="1"/>
</dbReference>
<dbReference type="HAMAP" id="MF_01032">
    <property type="entry name" value="LeuD_type2"/>
    <property type="match status" value="1"/>
</dbReference>
<dbReference type="InterPro" id="IPR015928">
    <property type="entry name" value="Aconitase/3IPM_dehydase_swvl"/>
</dbReference>
<dbReference type="InterPro" id="IPR000573">
    <property type="entry name" value="AconitaseA/IPMdHydase_ssu_swvl"/>
</dbReference>
<dbReference type="InterPro" id="IPR033940">
    <property type="entry name" value="IPMI_Swivel"/>
</dbReference>
<dbReference type="InterPro" id="IPR050075">
    <property type="entry name" value="LeuD"/>
</dbReference>
<dbReference type="InterPro" id="IPR011827">
    <property type="entry name" value="LeuD_type2/HacB/DmdB"/>
</dbReference>
<dbReference type="NCBIfam" id="TIGR02087">
    <property type="entry name" value="LEUD_arch"/>
    <property type="match status" value="1"/>
</dbReference>
<dbReference type="PANTHER" id="PTHR43345:SF2">
    <property type="entry name" value="3-ISOPROPYLMALATE DEHYDRATASE SMALL SUBUNIT 1"/>
    <property type="match status" value="1"/>
</dbReference>
<dbReference type="PANTHER" id="PTHR43345">
    <property type="entry name" value="3-ISOPROPYLMALATE DEHYDRATASE SMALL SUBUNIT 2-RELATED-RELATED"/>
    <property type="match status" value="1"/>
</dbReference>
<dbReference type="Pfam" id="PF00694">
    <property type="entry name" value="Aconitase_C"/>
    <property type="match status" value="1"/>
</dbReference>
<dbReference type="SUPFAM" id="SSF52016">
    <property type="entry name" value="LeuD/IlvD-like"/>
    <property type="match status" value="1"/>
</dbReference>
<proteinExistence type="inferred from homology"/>
<gene>
    <name evidence="1" type="primary">leuD</name>
    <name type="ordered locus">Deide_12400</name>
</gene>
<sequence>MPRVHVFARDHINTDEIIPARHLTTDIEAELAPYAMEDYDRDFAKRVQPGDIIVAGADFGCGSSREHAVWALRGAGVGAVIAPNFARIYYRNSINNGFLALECDGIVEAFQDGDEANLDLKGGTITNLRTGQTLTFVPVPQFALDVQKAGGWLEYMRAQVPAEADDSSSAQPHPGKENAHA</sequence>
<protein>
    <recommendedName>
        <fullName evidence="1">3-isopropylmalate dehydratase small subunit</fullName>
        <ecNumber evidence="1">4.2.1.33</ecNumber>
    </recommendedName>
    <alternativeName>
        <fullName evidence="1">Alpha-IPM isomerase</fullName>
        <shortName evidence="1">IPMI</shortName>
    </alternativeName>
    <alternativeName>
        <fullName evidence="1">Isopropylmalate isomerase</fullName>
    </alternativeName>
</protein>
<evidence type="ECO:0000255" key="1">
    <source>
        <dbReference type="HAMAP-Rule" id="MF_01032"/>
    </source>
</evidence>